<dbReference type="EMBL" id="CP000800">
    <property type="protein sequence ID" value="ABV18838.1"/>
    <property type="molecule type" value="Genomic_DNA"/>
</dbReference>
<dbReference type="RefSeq" id="WP_000375956.1">
    <property type="nucleotide sequence ID" value="NC_009801.1"/>
</dbReference>
<dbReference type="SMR" id="A7ZLL8"/>
<dbReference type="GeneID" id="93775566"/>
<dbReference type="KEGG" id="ecw:EcE24377A_1603"/>
<dbReference type="HOGENOM" id="CLU_023403_2_0_6"/>
<dbReference type="UniPathway" id="UPA00637"/>
<dbReference type="Proteomes" id="UP000001122">
    <property type="component" value="Chromosome"/>
</dbReference>
<dbReference type="GO" id="GO:0030288">
    <property type="term" value="C:outer membrane-bounded periplasmic space"/>
    <property type="evidence" value="ECO:0007669"/>
    <property type="project" value="TreeGrafter"/>
</dbReference>
<dbReference type="GO" id="GO:0030246">
    <property type="term" value="F:carbohydrate binding"/>
    <property type="evidence" value="ECO:0007669"/>
    <property type="project" value="InterPro"/>
</dbReference>
<dbReference type="GO" id="GO:0003824">
    <property type="term" value="F:catalytic activity"/>
    <property type="evidence" value="ECO:0007669"/>
    <property type="project" value="InterPro"/>
</dbReference>
<dbReference type="GO" id="GO:0051274">
    <property type="term" value="P:beta-glucan biosynthetic process"/>
    <property type="evidence" value="ECO:0007669"/>
    <property type="project" value="TreeGrafter"/>
</dbReference>
<dbReference type="FunFam" id="2.60.40.10:FF:000379">
    <property type="entry name" value="Glucans biosynthesis protein D"/>
    <property type="match status" value="1"/>
</dbReference>
<dbReference type="FunFam" id="2.70.98.10:FF:000004">
    <property type="entry name" value="Glucans biosynthesis protein D"/>
    <property type="match status" value="1"/>
</dbReference>
<dbReference type="Gene3D" id="2.70.98.10">
    <property type="match status" value="1"/>
</dbReference>
<dbReference type="Gene3D" id="2.60.40.10">
    <property type="entry name" value="Immunoglobulins"/>
    <property type="match status" value="1"/>
</dbReference>
<dbReference type="HAMAP" id="MF_01068">
    <property type="entry name" value="MdoD_OpgD"/>
    <property type="match status" value="1"/>
</dbReference>
<dbReference type="InterPro" id="IPR011013">
    <property type="entry name" value="Gal_mutarotase_sf_dom"/>
</dbReference>
<dbReference type="InterPro" id="IPR014718">
    <property type="entry name" value="GH-type_carb-bd"/>
</dbReference>
<dbReference type="InterPro" id="IPR023724">
    <property type="entry name" value="Glucan_biosyn_MdoD"/>
</dbReference>
<dbReference type="InterPro" id="IPR014438">
    <property type="entry name" value="Glucan_biosyn_MdoG/MdoD"/>
</dbReference>
<dbReference type="InterPro" id="IPR007444">
    <property type="entry name" value="Glucan_biosyn_MdoG_C"/>
</dbReference>
<dbReference type="InterPro" id="IPR013783">
    <property type="entry name" value="Ig-like_fold"/>
</dbReference>
<dbReference type="InterPro" id="IPR014756">
    <property type="entry name" value="Ig_E-set"/>
</dbReference>
<dbReference type="InterPro" id="IPR006311">
    <property type="entry name" value="TAT_signal"/>
</dbReference>
<dbReference type="InterPro" id="IPR019546">
    <property type="entry name" value="TAT_signal_bac_arc"/>
</dbReference>
<dbReference type="NCBIfam" id="TIGR01409">
    <property type="entry name" value="TAT_signal_seq"/>
    <property type="match status" value="1"/>
</dbReference>
<dbReference type="PANTHER" id="PTHR30504">
    <property type="entry name" value="GLUCANS BIOSYNTHESIS PROTEIN"/>
    <property type="match status" value="1"/>
</dbReference>
<dbReference type="PANTHER" id="PTHR30504:SF3">
    <property type="entry name" value="GLUCANS BIOSYNTHESIS PROTEIN D"/>
    <property type="match status" value="1"/>
</dbReference>
<dbReference type="Pfam" id="PF04349">
    <property type="entry name" value="MdoG"/>
    <property type="match status" value="1"/>
</dbReference>
<dbReference type="PIRSF" id="PIRSF006281">
    <property type="entry name" value="MdoG"/>
    <property type="match status" value="1"/>
</dbReference>
<dbReference type="SUPFAM" id="SSF81296">
    <property type="entry name" value="E set domains"/>
    <property type="match status" value="1"/>
</dbReference>
<dbReference type="SUPFAM" id="SSF74650">
    <property type="entry name" value="Galactose mutarotase-like"/>
    <property type="match status" value="1"/>
</dbReference>
<dbReference type="PROSITE" id="PS51318">
    <property type="entry name" value="TAT"/>
    <property type="match status" value="1"/>
</dbReference>
<feature type="signal peptide" description="Tat-type signal" evidence="1">
    <location>
        <begin position="1"/>
        <end position="32"/>
    </location>
</feature>
<feature type="chain" id="PRO_1000064543" description="Glucans biosynthesis protein D">
    <location>
        <begin position="33"/>
        <end position="551"/>
    </location>
</feature>
<comment type="function">
    <text evidence="1">Probably involved in the control of the structural glucose backbone of osmoregulated periplasmic glucans (OPGs).</text>
</comment>
<comment type="pathway">
    <text evidence="1">Glycan metabolism; osmoregulated periplasmic glucan (OPG) biosynthesis.</text>
</comment>
<comment type="subcellular location">
    <subcellularLocation>
        <location evidence="1">Periplasm</location>
    </subcellularLocation>
</comment>
<comment type="PTM">
    <text>Predicted to be exported by the Tat system. The position of the signal peptide cleavage has not been experimentally proven.</text>
</comment>
<comment type="similarity">
    <text evidence="1">Belongs to the OpgD/OpgG family.</text>
</comment>
<keyword id="KW-0574">Periplasm</keyword>
<keyword id="KW-1185">Reference proteome</keyword>
<keyword id="KW-0732">Signal</keyword>
<sequence length="551" mass="62768">MDRRRFIKGSMAMAAVCGTSGIASLFSQAAFAADSDIADGQTQRFDFSILQSMAHDLAQTAWRGAPRPLPDTLATMTPQAYNSIQYDAEKSLWHNVENRQLDAQFFHMGMGFRRRVRMFSVDPATHLAREIHFRPELFKYNDAGVDTKQLEGQSDLGFAGFRVFKAPELARRDVVSFLGASYFRAVDDTYQYGLSARGLAIDTYTDSKEEFPDFTAFWFDTVKPGATTFTVYALLDSASITGAYKFTIHCEKSQVIMDVENHLYARKDIKQLGIAPMTSMFSCGTNERRMCDTIHPQIHDSDRLSMWRGNGEWICRPLNNPQKLQFNAYTDNNPKGFGLLQLDRDFSHYQDIMGWYNKRPSLWVEPRNKWGKGTIGLMEIPTTGETLDNIVCFWQPEKAVKAGDEFAFQYRLYWSAQPPVHCPLARVMATRTGMGGFPEGWAPGEHYPEKWARRFAVDFVGGDLKAAAPKGIEPVITLSSGEAKQIEILYIEPIDGYRIQFDWYPTSDSTDPVDMRMYLRCQGDAISETWLYQYFPPAPDKRQYVDDRVMS</sequence>
<reference key="1">
    <citation type="journal article" date="2008" name="J. Bacteriol.">
        <title>The pangenome structure of Escherichia coli: comparative genomic analysis of E. coli commensal and pathogenic isolates.</title>
        <authorList>
            <person name="Rasko D.A."/>
            <person name="Rosovitz M.J."/>
            <person name="Myers G.S.A."/>
            <person name="Mongodin E.F."/>
            <person name="Fricke W.F."/>
            <person name="Gajer P."/>
            <person name="Crabtree J."/>
            <person name="Sebaihia M."/>
            <person name="Thomson N.R."/>
            <person name="Chaudhuri R."/>
            <person name="Henderson I.R."/>
            <person name="Sperandio V."/>
            <person name="Ravel J."/>
        </authorList>
    </citation>
    <scope>NUCLEOTIDE SEQUENCE [LARGE SCALE GENOMIC DNA]</scope>
    <source>
        <strain>E24377A / ETEC</strain>
    </source>
</reference>
<organism>
    <name type="scientific">Escherichia coli O139:H28 (strain E24377A / ETEC)</name>
    <dbReference type="NCBI Taxonomy" id="331111"/>
    <lineage>
        <taxon>Bacteria</taxon>
        <taxon>Pseudomonadati</taxon>
        <taxon>Pseudomonadota</taxon>
        <taxon>Gammaproteobacteria</taxon>
        <taxon>Enterobacterales</taxon>
        <taxon>Enterobacteriaceae</taxon>
        <taxon>Escherichia</taxon>
    </lineage>
</organism>
<evidence type="ECO:0000255" key="1">
    <source>
        <dbReference type="HAMAP-Rule" id="MF_01068"/>
    </source>
</evidence>
<name>OPGD_ECO24</name>
<proteinExistence type="inferred from homology"/>
<gene>
    <name evidence="1" type="primary">mdoD</name>
    <name evidence="1" type="synonym">opgD</name>
    <name type="ordered locus">EcE24377A_1603</name>
</gene>
<accession>A7ZLL8</accession>
<protein>
    <recommendedName>
        <fullName evidence="1">Glucans biosynthesis protein D</fullName>
    </recommendedName>
</protein>